<comment type="function">
    <text>Component of the Mediator complex, a coactivator involved in the regulated transcription of nearly all RNA polymerase II-dependent genes. Mediator functions as a bridge to convey information from gene-specific regulatory proteins to the basal RNA polymerase II transcription machinery. The Mediator complex, having a compact conformation in its free form, is recruited to promoters by direct interactions with regulatory proteins and serves for the assembly of a functional preinitiation complex with RNA polymerase II and the general transcription factors.</text>
</comment>
<comment type="subunit">
    <text evidence="2">Component of the Mediator complex.</text>
</comment>
<comment type="subcellular location">
    <subcellularLocation>
        <location evidence="3">Nucleus</location>
    </subcellularLocation>
</comment>
<comment type="similarity">
    <text evidence="3">Belongs to the plant Mediator complex subunit 30 family.</text>
</comment>
<organism>
    <name type="scientific">Arabidopsis thaliana</name>
    <name type="common">Mouse-ear cress</name>
    <dbReference type="NCBI Taxonomy" id="3702"/>
    <lineage>
        <taxon>Eukaryota</taxon>
        <taxon>Viridiplantae</taxon>
        <taxon>Streptophyta</taxon>
        <taxon>Embryophyta</taxon>
        <taxon>Tracheophyta</taxon>
        <taxon>Spermatophyta</taxon>
        <taxon>Magnoliopsida</taxon>
        <taxon>eudicotyledons</taxon>
        <taxon>Gunneridae</taxon>
        <taxon>Pentapetalae</taxon>
        <taxon>rosids</taxon>
        <taxon>malvids</taxon>
        <taxon>Brassicales</taxon>
        <taxon>Brassicaceae</taxon>
        <taxon>Camelineae</taxon>
        <taxon>Arabidopsis</taxon>
    </lineage>
</organism>
<dbReference type="EMBL" id="AB007649">
    <property type="protein sequence ID" value="BAB08813.1"/>
    <property type="molecule type" value="Genomic_DNA"/>
</dbReference>
<dbReference type="EMBL" id="CP002688">
    <property type="protein sequence ID" value="AED97757.1"/>
    <property type="molecule type" value="Genomic_DNA"/>
</dbReference>
<dbReference type="EMBL" id="BT033074">
    <property type="protein sequence ID" value="ACE95179.1"/>
    <property type="molecule type" value="mRNA"/>
</dbReference>
<dbReference type="EMBL" id="AK175621">
    <property type="protein sequence ID" value="BAD43384.1"/>
    <property type="molecule type" value="mRNA"/>
</dbReference>
<dbReference type="RefSeq" id="NP_568973.1">
    <property type="nucleotide sequence ID" value="NM_125743.4"/>
</dbReference>
<dbReference type="SMR" id="Q9FMV4"/>
<dbReference type="FunCoup" id="Q9FMV4">
    <property type="interactions" value="268"/>
</dbReference>
<dbReference type="IntAct" id="Q9FMV4">
    <property type="interactions" value="1"/>
</dbReference>
<dbReference type="STRING" id="3702.Q9FMV4"/>
<dbReference type="GlyGen" id="Q9FMV4">
    <property type="glycosylation" value="1 site"/>
</dbReference>
<dbReference type="iPTMnet" id="Q9FMV4"/>
<dbReference type="PaxDb" id="3702-AT5G63480.1"/>
<dbReference type="ProteomicsDB" id="228842"/>
<dbReference type="EnsemblPlants" id="AT5G63480.1">
    <property type="protein sequence ID" value="AT5G63480.1"/>
    <property type="gene ID" value="AT5G63480"/>
</dbReference>
<dbReference type="GeneID" id="836467"/>
<dbReference type="Gramene" id="AT5G63480.1">
    <property type="protein sequence ID" value="AT5G63480.1"/>
    <property type="gene ID" value="AT5G63480"/>
</dbReference>
<dbReference type="KEGG" id="ath:AT5G63480"/>
<dbReference type="Araport" id="AT5G63480"/>
<dbReference type="TAIR" id="AT5G63480"/>
<dbReference type="eggNOG" id="ENOG502RY8Y">
    <property type="taxonomic scope" value="Eukaryota"/>
</dbReference>
<dbReference type="HOGENOM" id="CLU_130098_0_0_1"/>
<dbReference type="InParanoid" id="Q9FMV4"/>
<dbReference type="PhylomeDB" id="Q9FMV4"/>
<dbReference type="PRO" id="PR:Q9FMV4"/>
<dbReference type="Proteomes" id="UP000006548">
    <property type="component" value="Chromosome 5"/>
</dbReference>
<dbReference type="ExpressionAtlas" id="Q9FMV4">
    <property type="expression patterns" value="baseline and differential"/>
</dbReference>
<dbReference type="GO" id="GO:0016592">
    <property type="term" value="C:mediator complex"/>
    <property type="evidence" value="ECO:0000314"/>
    <property type="project" value="UniProtKB"/>
</dbReference>
<dbReference type="InterPro" id="IPR034568">
    <property type="entry name" value="MED30"/>
</dbReference>
<dbReference type="PANTHER" id="PTHR36406">
    <property type="entry name" value="MEDIATOR OF RNA POLYMERASE II TRANSCRIPTION SUBUNIT 30"/>
    <property type="match status" value="1"/>
</dbReference>
<dbReference type="PANTHER" id="PTHR36406:SF2">
    <property type="entry name" value="MEDIATOR OF RNA POLYMERASE II TRANSCRIPTION SUBUNIT 30"/>
    <property type="match status" value="1"/>
</dbReference>
<name>MED30_ARATH</name>
<reference key="1">
    <citation type="journal article" date="1997" name="DNA Res.">
        <title>Structural analysis of Arabidopsis thaliana chromosome 5. III. Sequence features of the regions of 1,191,918 bp covered by seventeen physically assigned P1 clones.</title>
        <authorList>
            <person name="Nakamura Y."/>
            <person name="Sato S."/>
            <person name="Kaneko T."/>
            <person name="Kotani H."/>
            <person name="Asamizu E."/>
            <person name="Miyajima N."/>
            <person name="Tabata S."/>
        </authorList>
    </citation>
    <scope>NUCLEOTIDE SEQUENCE [LARGE SCALE GENOMIC DNA]</scope>
    <source>
        <strain>cv. Columbia</strain>
    </source>
</reference>
<reference key="2">
    <citation type="journal article" date="2017" name="Plant J.">
        <title>Araport11: a complete reannotation of the Arabidopsis thaliana reference genome.</title>
        <authorList>
            <person name="Cheng C.Y."/>
            <person name="Krishnakumar V."/>
            <person name="Chan A.P."/>
            <person name="Thibaud-Nissen F."/>
            <person name="Schobel S."/>
            <person name="Town C.D."/>
        </authorList>
    </citation>
    <scope>GENOME REANNOTATION</scope>
    <source>
        <strain>cv. Columbia</strain>
    </source>
</reference>
<reference key="3">
    <citation type="submission" date="2008-06" db="EMBL/GenBank/DDBJ databases">
        <title>Arabidopsis ORF clones.</title>
        <authorList>
            <person name="de los Reyes C."/>
            <person name="Quan R."/>
            <person name="Chen H."/>
            <person name="Bautista V."/>
            <person name="Kim C.J."/>
            <person name="Ecker J.R."/>
        </authorList>
    </citation>
    <scope>NUCLEOTIDE SEQUENCE [LARGE SCALE MRNA]</scope>
</reference>
<reference key="4">
    <citation type="submission" date="2004-09" db="EMBL/GenBank/DDBJ databases">
        <title>Large-scale analysis of RIKEN Arabidopsis full-length (RAFL) cDNAs.</title>
        <authorList>
            <person name="Totoki Y."/>
            <person name="Seki M."/>
            <person name="Ishida J."/>
            <person name="Nakajima M."/>
            <person name="Enju A."/>
            <person name="Kamiya A."/>
            <person name="Narusaka M."/>
            <person name="Shin-i T."/>
            <person name="Nakagawa M."/>
            <person name="Sakamoto N."/>
            <person name="Oishi K."/>
            <person name="Kohara Y."/>
            <person name="Kobayashi M."/>
            <person name="Toyoda A."/>
            <person name="Sakaki Y."/>
            <person name="Sakurai T."/>
            <person name="Iida K."/>
            <person name="Akiyama K."/>
            <person name="Satou M."/>
            <person name="Toyoda T."/>
            <person name="Konagaya A."/>
            <person name="Carninci P."/>
            <person name="Kawai J."/>
            <person name="Hayashizaki Y."/>
            <person name="Shinozaki K."/>
        </authorList>
    </citation>
    <scope>NUCLEOTIDE SEQUENCE [LARGE SCALE MRNA] OF 6-189</scope>
    <source>
        <strain>cv. Columbia</strain>
    </source>
</reference>
<reference key="5">
    <citation type="journal article" date="2007" name="Mol. Cell">
        <title>Purification of a plant mediator from Arabidopsis thaliana identifies PFT1 as the Med25 subunit.</title>
        <authorList>
            <person name="Baeckstroem S."/>
            <person name="Elfving N."/>
            <person name="Nilsson R."/>
            <person name="Wingsle G."/>
            <person name="Bjoerklund S."/>
        </authorList>
    </citation>
    <scope>IDENTIFICATION BY MASS SPECTROMETRY</scope>
    <scope>SUBUNIT</scope>
    <scope>NOMENCLATURE</scope>
</reference>
<reference key="6">
    <citation type="journal article" date="2011" name="Plant Physiol.">
        <title>The Mediator complex in plants: structure, phylogeny, and expression profiling of representative genes in a dicot (Arabidopsis) and a monocot (rice) during reproduction and abiotic stress.</title>
        <authorList>
            <person name="Mathur S."/>
            <person name="Vyas S."/>
            <person name="Kapoor S."/>
            <person name="Tyagi A.K."/>
        </authorList>
    </citation>
    <scope>IDENTIFICATION</scope>
    <scope>NOMENCLATURE</scope>
</reference>
<sequence>MLQKQVSTTTTMTTQELAMEGEKQLEETIEAAFQIISAMNDELCNPSLWSTSATPSSAATTTGSNGSALVSADAAAIDGTSHHSESAGGGGGGGSGNSVLDEASLRYKNSVTSLRAVLAAIPNSQKAKASEMQNGLGSPESEDEIEKLEEQALSLRMEIAKKNVHVKELIDKLRELIADISTWQSPCSV</sequence>
<protein>
    <recommendedName>
        <fullName>Mediator of RNA polymerase II transcription subunit 30</fullName>
    </recommendedName>
</protein>
<feature type="chain" id="PRO_0000419193" description="Mediator of RNA polymerase II transcription subunit 30">
    <location>
        <begin position="1"/>
        <end position="189"/>
    </location>
</feature>
<feature type="coiled-coil region" evidence="1">
    <location>
        <begin position="138"/>
        <end position="178"/>
    </location>
</feature>
<feature type="sequence conflict" description="In Ref. 4; BAD43384." evidence="3" ref="4">
    <original>G</original>
    <variation>E</variation>
    <location>
        <position position="93"/>
    </location>
</feature>
<feature type="sequence conflict" description="In Ref. 4; BAD43384." evidence="3" ref="4">
    <original>K</original>
    <variation>I</variation>
    <location>
        <position position="172"/>
    </location>
</feature>
<proteinExistence type="evidence at protein level"/>
<accession>Q9FMV4</accession>
<accession>Q681J6</accession>
<evidence type="ECO:0000255" key="1"/>
<evidence type="ECO:0000269" key="2">
    <source>
    </source>
</evidence>
<evidence type="ECO:0000305" key="3"/>
<gene>
    <name type="primary">MED30</name>
    <name type="synonym">MED30_1</name>
    <name type="ordered locus">At5g63480</name>
    <name type="ORF">MLE2.11</name>
</gene>
<keyword id="KW-0175">Coiled coil</keyword>
<keyword id="KW-0539">Nucleus</keyword>
<keyword id="KW-1185">Reference proteome</keyword>
<keyword id="KW-0804">Transcription</keyword>
<keyword id="KW-0805">Transcription regulation</keyword>